<dbReference type="EC" id="3.6.5.n1" evidence="1"/>
<dbReference type="EMBL" id="CP001340">
    <property type="protein sequence ID" value="ACL94551.1"/>
    <property type="molecule type" value="Genomic_DNA"/>
</dbReference>
<dbReference type="RefSeq" id="WP_012640125.1">
    <property type="nucleotide sequence ID" value="NC_011916.1"/>
</dbReference>
<dbReference type="RefSeq" id="YP_002516459.1">
    <property type="nucleotide sequence ID" value="NC_011916.1"/>
</dbReference>
<dbReference type="SMR" id="B8H2Z7"/>
<dbReference type="GeneID" id="7329837"/>
<dbReference type="KEGG" id="ccs:CCNA_01086"/>
<dbReference type="PATRIC" id="fig|565050.3.peg.1067"/>
<dbReference type="HOGENOM" id="CLU_009995_3_3_5"/>
<dbReference type="OrthoDB" id="9802948at2"/>
<dbReference type="PhylomeDB" id="B8H2Z7"/>
<dbReference type="Proteomes" id="UP000001364">
    <property type="component" value="Chromosome"/>
</dbReference>
<dbReference type="GO" id="GO:0005886">
    <property type="term" value="C:plasma membrane"/>
    <property type="evidence" value="ECO:0007669"/>
    <property type="project" value="UniProtKB-SubCell"/>
</dbReference>
<dbReference type="GO" id="GO:0005525">
    <property type="term" value="F:GTP binding"/>
    <property type="evidence" value="ECO:0007669"/>
    <property type="project" value="UniProtKB-UniRule"/>
</dbReference>
<dbReference type="GO" id="GO:0003924">
    <property type="term" value="F:GTPase activity"/>
    <property type="evidence" value="ECO:0007669"/>
    <property type="project" value="UniProtKB-UniRule"/>
</dbReference>
<dbReference type="GO" id="GO:0097216">
    <property type="term" value="F:guanosine tetraphosphate binding"/>
    <property type="evidence" value="ECO:0007669"/>
    <property type="project" value="UniProtKB-ARBA"/>
</dbReference>
<dbReference type="GO" id="GO:0043022">
    <property type="term" value="F:ribosome binding"/>
    <property type="evidence" value="ECO:0007669"/>
    <property type="project" value="UniProtKB-UniRule"/>
</dbReference>
<dbReference type="GO" id="GO:0003746">
    <property type="term" value="F:translation elongation factor activity"/>
    <property type="evidence" value="ECO:0007669"/>
    <property type="project" value="UniProtKB-UniRule"/>
</dbReference>
<dbReference type="GO" id="GO:0045727">
    <property type="term" value="P:positive regulation of translation"/>
    <property type="evidence" value="ECO:0007669"/>
    <property type="project" value="UniProtKB-UniRule"/>
</dbReference>
<dbReference type="CDD" id="cd03699">
    <property type="entry name" value="EF4_II"/>
    <property type="match status" value="1"/>
</dbReference>
<dbReference type="CDD" id="cd16260">
    <property type="entry name" value="EF4_III"/>
    <property type="match status" value="1"/>
</dbReference>
<dbReference type="CDD" id="cd01890">
    <property type="entry name" value="LepA"/>
    <property type="match status" value="1"/>
</dbReference>
<dbReference type="CDD" id="cd03709">
    <property type="entry name" value="lepA_C"/>
    <property type="match status" value="1"/>
</dbReference>
<dbReference type="FunFam" id="3.40.50.300:FF:000078">
    <property type="entry name" value="Elongation factor 4"/>
    <property type="match status" value="1"/>
</dbReference>
<dbReference type="FunFam" id="2.40.30.10:FF:000015">
    <property type="entry name" value="Translation factor GUF1, mitochondrial"/>
    <property type="match status" value="1"/>
</dbReference>
<dbReference type="FunFam" id="3.30.70.240:FF:000007">
    <property type="entry name" value="Translation factor GUF1, mitochondrial"/>
    <property type="match status" value="1"/>
</dbReference>
<dbReference type="FunFam" id="3.30.70.2570:FF:000001">
    <property type="entry name" value="Translation factor GUF1, mitochondrial"/>
    <property type="match status" value="1"/>
</dbReference>
<dbReference type="FunFam" id="3.30.70.870:FF:000004">
    <property type="entry name" value="Translation factor GUF1, mitochondrial"/>
    <property type="match status" value="1"/>
</dbReference>
<dbReference type="Gene3D" id="3.30.70.240">
    <property type="match status" value="1"/>
</dbReference>
<dbReference type="Gene3D" id="3.30.70.2570">
    <property type="entry name" value="Elongation factor 4, C-terminal domain"/>
    <property type="match status" value="1"/>
</dbReference>
<dbReference type="Gene3D" id="3.30.70.870">
    <property type="entry name" value="Elongation Factor G (Translational Gtpase), domain 3"/>
    <property type="match status" value="1"/>
</dbReference>
<dbReference type="Gene3D" id="3.40.50.300">
    <property type="entry name" value="P-loop containing nucleotide triphosphate hydrolases"/>
    <property type="match status" value="1"/>
</dbReference>
<dbReference type="Gene3D" id="2.40.30.10">
    <property type="entry name" value="Translation factors"/>
    <property type="match status" value="1"/>
</dbReference>
<dbReference type="HAMAP" id="MF_00071">
    <property type="entry name" value="LepA"/>
    <property type="match status" value="1"/>
</dbReference>
<dbReference type="InterPro" id="IPR006297">
    <property type="entry name" value="EF-4"/>
</dbReference>
<dbReference type="InterPro" id="IPR035647">
    <property type="entry name" value="EFG_III/V"/>
</dbReference>
<dbReference type="InterPro" id="IPR000640">
    <property type="entry name" value="EFG_V-like"/>
</dbReference>
<dbReference type="InterPro" id="IPR004161">
    <property type="entry name" value="EFTu-like_2"/>
</dbReference>
<dbReference type="InterPro" id="IPR031157">
    <property type="entry name" value="G_TR_CS"/>
</dbReference>
<dbReference type="InterPro" id="IPR038363">
    <property type="entry name" value="LepA_C_sf"/>
</dbReference>
<dbReference type="InterPro" id="IPR013842">
    <property type="entry name" value="LepA_CTD"/>
</dbReference>
<dbReference type="InterPro" id="IPR035654">
    <property type="entry name" value="LepA_IV"/>
</dbReference>
<dbReference type="InterPro" id="IPR027417">
    <property type="entry name" value="P-loop_NTPase"/>
</dbReference>
<dbReference type="InterPro" id="IPR005225">
    <property type="entry name" value="Small_GTP-bd"/>
</dbReference>
<dbReference type="InterPro" id="IPR000795">
    <property type="entry name" value="T_Tr_GTP-bd_dom"/>
</dbReference>
<dbReference type="NCBIfam" id="TIGR01393">
    <property type="entry name" value="lepA"/>
    <property type="match status" value="1"/>
</dbReference>
<dbReference type="NCBIfam" id="TIGR00231">
    <property type="entry name" value="small_GTP"/>
    <property type="match status" value="1"/>
</dbReference>
<dbReference type="PANTHER" id="PTHR43512:SF4">
    <property type="entry name" value="TRANSLATION FACTOR GUF1 HOMOLOG, CHLOROPLASTIC"/>
    <property type="match status" value="1"/>
</dbReference>
<dbReference type="PANTHER" id="PTHR43512">
    <property type="entry name" value="TRANSLATION FACTOR GUF1-RELATED"/>
    <property type="match status" value="1"/>
</dbReference>
<dbReference type="Pfam" id="PF00679">
    <property type="entry name" value="EFG_C"/>
    <property type="match status" value="1"/>
</dbReference>
<dbReference type="Pfam" id="PF00009">
    <property type="entry name" value="GTP_EFTU"/>
    <property type="match status" value="1"/>
</dbReference>
<dbReference type="Pfam" id="PF03144">
    <property type="entry name" value="GTP_EFTU_D2"/>
    <property type="match status" value="1"/>
</dbReference>
<dbReference type="Pfam" id="PF06421">
    <property type="entry name" value="LepA_C"/>
    <property type="match status" value="1"/>
</dbReference>
<dbReference type="PRINTS" id="PR00315">
    <property type="entry name" value="ELONGATNFCT"/>
</dbReference>
<dbReference type="SMART" id="SM00838">
    <property type="entry name" value="EFG_C"/>
    <property type="match status" value="1"/>
</dbReference>
<dbReference type="SUPFAM" id="SSF54980">
    <property type="entry name" value="EF-G C-terminal domain-like"/>
    <property type="match status" value="2"/>
</dbReference>
<dbReference type="SUPFAM" id="SSF52540">
    <property type="entry name" value="P-loop containing nucleoside triphosphate hydrolases"/>
    <property type="match status" value="1"/>
</dbReference>
<dbReference type="PROSITE" id="PS00301">
    <property type="entry name" value="G_TR_1"/>
    <property type="match status" value="1"/>
</dbReference>
<dbReference type="PROSITE" id="PS51722">
    <property type="entry name" value="G_TR_2"/>
    <property type="match status" value="1"/>
</dbReference>
<keyword id="KW-0997">Cell inner membrane</keyword>
<keyword id="KW-1003">Cell membrane</keyword>
<keyword id="KW-0342">GTP-binding</keyword>
<keyword id="KW-0378">Hydrolase</keyword>
<keyword id="KW-0472">Membrane</keyword>
<keyword id="KW-0547">Nucleotide-binding</keyword>
<keyword id="KW-0648">Protein biosynthesis</keyword>
<keyword id="KW-1185">Reference proteome</keyword>
<accession>B8H2Z7</accession>
<sequence length="602" mass="66312">MTSTPLDKIRNFSIVAHIDHGKSTLSDRLIQTTGGLTAREMSAQVLDNMDIEKERGITIKAQTVRLTYKAADGETYILNLMDTPGHVDFAYEVSRSLAACEGSILVVDASQGVEAQTLANVYQAIDNNHEIVPVLNKVDLPAADVDRVKAQIEDVIGLDASDAVECSAKTGVGIPEVLEAIVTRLPPPKGDPNAPLKALLVDAWYDAYLGVVVLVRIFDGSLKAGQQVRMMQTGATHRIDKVGVFTPKATDVEYLGPGEVGFFTASIKEVADAAVGDTITDEKKPTAEALKGFKEVVPVVFCGLFPVDAADFEDLRAAVGKLRLNDASFTYEMESSAALGFGFRCGFLGLLHLEIIQERLSREFDLDLIATAPSVVYKIKLRNGDEIELHNPADLPDVMQIEEIAEPWIKATIFTPDDYLGGVIKLCQDRRGMQRELSYVGSRAMVVYDLPLNEVVFDFYDRLKSISKGYASFDYQLEDYRAGDLVKMSILVNSEPVDALSMLVHRSRAESRGRGMCEKMKELIPQHMFVIPIQAAIGGRIIARETVRALRKDVTAKCYGGDASRKKKLLEKQKEGKKRMRQFGKVEIPQEAFIAALKMDED</sequence>
<gene>
    <name evidence="1" type="primary">lepA</name>
    <name type="ordered locus">CCNA_01086</name>
</gene>
<name>LEPA_CAUVN</name>
<evidence type="ECO:0000255" key="1">
    <source>
        <dbReference type="HAMAP-Rule" id="MF_00071"/>
    </source>
</evidence>
<reference key="1">
    <citation type="journal article" date="2010" name="J. Bacteriol.">
        <title>The genetic basis of laboratory adaptation in Caulobacter crescentus.</title>
        <authorList>
            <person name="Marks M.E."/>
            <person name="Castro-Rojas C.M."/>
            <person name="Teiling C."/>
            <person name="Du L."/>
            <person name="Kapatral V."/>
            <person name="Walunas T.L."/>
            <person name="Crosson S."/>
        </authorList>
    </citation>
    <scope>NUCLEOTIDE SEQUENCE [LARGE SCALE GENOMIC DNA]</scope>
    <source>
        <strain>NA1000 / CB15N</strain>
    </source>
</reference>
<proteinExistence type="inferred from homology"/>
<organism>
    <name type="scientific">Caulobacter vibrioides (strain NA1000 / CB15N)</name>
    <name type="common">Caulobacter crescentus</name>
    <dbReference type="NCBI Taxonomy" id="565050"/>
    <lineage>
        <taxon>Bacteria</taxon>
        <taxon>Pseudomonadati</taxon>
        <taxon>Pseudomonadota</taxon>
        <taxon>Alphaproteobacteria</taxon>
        <taxon>Caulobacterales</taxon>
        <taxon>Caulobacteraceae</taxon>
        <taxon>Caulobacter</taxon>
    </lineage>
</organism>
<comment type="function">
    <text evidence="1">Required for accurate and efficient protein synthesis under certain stress conditions. May act as a fidelity factor of the translation reaction, by catalyzing a one-codon backward translocation of tRNAs on improperly translocated ribosomes. Back-translocation proceeds from a post-translocation (POST) complex to a pre-translocation (PRE) complex, thus giving elongation factor G a second chance to translocate the tRNAs correctly. Binds to ribosomes in a GTP-dependent manner.</text>
</comment>
<comment type="catalytic activity">
    <reaction evidence="1">
        <text>GTP + H2O = GDP + phosphate + H(+)</text>
        <dbReference type="Rhea" id="RHEA:19669"/>
        <dbReference type="ChEBI" id="CHEBI:15377"/>
        <dbReference type="ChEBI" id="CHEBI:15378"/>
        <dbReference type="ChEBI" id="CHEBI:37565"/>
        <dbReference type="ChEBI" id="CHEBI:43474"/>
        <dbReference type="ChEBI" id="CHEBI:58189"/>
        <dbReference type="EC" id="3.6.5.n1"/>
    </reaction>
</comment>
<comment type="subcellular location">
    <subcellularLocation>
        <location evidence="1">Cell inner membrane</location>
        <topology evidence="1">Peripheral membrane protein</topology>
        <orientation evidence="1">Cytoplasmic side</orientation>
    </subcellularLocation>
</comment>
<comment type="similarity">
    <text evidence="1">Belongs to the TRAFAC class translation factor GTPase superfamily. Classic translation factor GTPase family. LepA subfamily.</text>
</comment>
<feature type="chain" id="PRO_1000118043" description="Elongation factor 4">
    <location>
        <begin position="1"/>
        <end position="602"/>
    </location>
</feature>
<feature type="domain" description="tr-type G">
    <location>
        <begin position="7"/>
        <end position="189"/>
    </location>
</feature>
<feature type="binding site" evidence="1">
    <location>
        <begin position="19"/>
        <end position="24"/>
    </location>
    <ligand>
        <name>GTP</name>
        <dbReference type="ChEBI" id="CHEBI:37565"/>
    </ligand>
</feature>
<feature type="binding site" evidence="1">
    <location>
        <begin position="136"/>
        <end position="139"/>
    </location>
    <ligand>
        <name>GTP</name>
        <dbReference type="ChEBI" id="CHEBI:37565"/>
    </ligand>
</feature>
<protein>
    <recommendedName>
        <fullName evidence="1">Elongation factor 4</fullName>
        <shortName evidence="1">EF-4</shortName>
        <ecNumber evidence="1">3.6.5.n1</ecNumber>
    </recommendedName>
    <alternativeName>
        <fullName evidence="1">Ribosomal back-translocase LepA</fullName>
    </alternativeName>
</protein>